<organism>
    <name type="scientific">Rhizobium etli (strain CIAT 652)</name>
    <dbReference type="NCBI Taxonomy" id="491916"/>
    <lineage>
        <taxon>Bacteria</taxon>
        <taxon>Pseudomonadati</taxon>
        <taxon>Pseudomonadota</taxon>
        <taxon>Alphaproteobacteria</taxon>
        <taxon>Hyphomicrobiales</taxon>
        <taxon>Rhizobiaceae</taxon>
        <taxon>Rhizobium/Agrobacterium group</taxon>
        <taxon>Rhizobium</taxon>
    </lineage>
</organism>
<evidence type="ECO:0000255" key="1">
    <source>
        <dbReference type="HAMAP-Rule" id="MF_00294"/>
    </source>
</evidence>
<evidence type="ECO:0000305" key="2"/>
<protein>
    <recommendedName>
        <fullName evidence="1">Large ribosomal subunit protein bL33</fullName>
    </recommendedName>
    <alternativeName>
        <fullName evidence="2">50S ribosomal protein L33</fullName>
    </alternativeName>
</protein>
<proteinExistence type="inferred from homology"/>
<name>RL33_RHIE6</name>
<comment type="similarity">
    <text evidence="1">Belongs to the bacterial ribosomal protein bL33 family.</text>
</comment>
<sequence>MAKATTIKIKLLSTADTGFFYVTTKNSRTMTDKMTKTKYDPIAKKHVEFKETKIK</sequence>
<dbReference type="EMBL" id="CP001074">
    <property type="protein sequence ID" value="ACE90681.1"/>
    <property type="molecule type" value="Genomic_DNA"/>
</dbReference>
<dbReference type="SMR" id="B3PW29"/>
<dbReference type="KEGG" id="rec:RHECIAT_CH0001707"/>
<dbReference type="eggNOG" id="COG0267">
    <property type="taxonomic scope" value="Bacteria"/>
</dbReference>
<dbReference type="HOGENOM" id="CLU_190949_1_1_5"/>
<dbReference type="Proteomes" id="UP000008817">
    <property type="component" value="Chromosome"/>
</dbReference>
<dbReference type="GO" id="GO:0022625">
    <property type="term" value="C:cytosolic large ribosomal subunit"/>
    <property type="evidence" value="ECO:0007669"/>
    <property type="project" value="TreeGrafter"/>
</dbReference>
<dbReference type="GO" id="GO:0003735">
    <property type="term" value="F:structural constituent of ribosome"/>
    <property type="evidence" value="ECO:0007669"/>
    <property type="project" value="InterPro"/>
</dbReference>
<dbReference type="GO" id="GO:0006412">
    <property type="term" value="P:translation"/>
    <property type="evidence" value="ECO:0007669"/>
    <property type="project" value="UniProtKB-UniRule"/>
</dbReference>
<dbReference type="Gene3D" id="2.20.28.120">
    <property type="entry name" value="Ribosomal protein L33"/>
    <property type="match status" value="1"/>
</dbReference>
<dbReference type="HAMAP" id="MF_00294">
    <property type="entry name" value="Ribosomal_bL33"/>
    <property type="match status" value="1"/>
</dbReference>
<dbReference type="InterPro" id="IPR001705">
    <property type="entry name" value="Ribosomal_bL33"/>
</dbReference>
<dbReference type="InterPro" id="IPR018264">
    <property type="entry name" value="Ribosomal_bL33_CS"/>
</dbReference>
<dbReference type="InterPro" id="IPR038584">
    <property type="entry name" value="Ribosomal_bL33_sf"/>
</dbReference>
<dbReference type="InterPro" id="IPR011332">
    <property type="entry name" value="Ribosomal_zn-bd"/>
</dbReference>
<dbReference type="NCBIfam" id="NF001860">
    <property type="entry name" value="PRK00595.1"/>
    <property type="match status" value="1"/>
</dbReference>
<dbReference type="NCBIfam" id="TIGR01023">
    <property type="entry name" value="rpmG_bact"/>
    <property type="match status" value="1"/>
</dbReference>
<dbReference type="PANTHER" id="PTHR15238">
    <property type="entry name" value="54S RIBOSOMAL PROTEIN L39, MITOCHONDRIAL"/>
    <property type="match status" value="1"/>
</dbReference>
<dbReference type="PANTHER" id="PTHR15238:SF1">
    <property type="entry name" value="LARGE RIBOSOMAL SUBUNIT PROTEIN BL33M"/>
    <property type="match status" value="1"/>
</dbReference>
<dbReference type="Pfam" id="PF00471">
    <property type="entry name" value="Ribosomal_L33"/>
    <property type="match status" value="1"/>
</dbReference>
<dbReference type="SUPFAM" id="SSF57829">
    <property type="entry name" value="Zn-binding ribosomal proteins"/>
    <property type="match status" value="1"/>
</dbReference>
<dbReference type="PROSITE" id="PS00582">
    <property type="entry name" value="RIBOSOMAL_L33"/>
    <property type="match status" value="1"/>
</dbReference>
<gene>
    <name evidence="1" type="primary">rpmG</name>
    <name type="ordered locus">RHECIAT_CH0001707</name>
</gene>
<accession>B3PW29</accession>
<reference key="1">
    <citation type="journal article" date="2010" name="Appl. Environ. Microbiol.">
        <title>Conserved symbiotic plasmid DNA sequences in the multireplicon pangenomic structure of Rhizobium etli.</title>
        <authorList>
            <person name="Gonzalez V."/>
            <person name="Acosta J.L."/>
            <person name="Santamaria R.I."/>
            <person name="Bustos P."/>
            <person name="Fernandez J.L."/>
            <person name="Hernandez Gonzalez I.L."/>
            <person name="Diaz R."/>
            <person name="Flores M."/>
            <person name="Palacios R."/>
            <person name="Mora J."/>
            <person name="Davila G."/>
        </authorList>
    </citation>
    <scope>NUCLEOTIDE SEQUENCE [LARGE SCALE GENOMIC DNA]</scope>
    <source>
        <strain>CIAT 652</strain>
    </source>
</reference>
<feature type="chain" id="PRO_0000356624" description="Large ribosomal subunit protein bL33">
    <location>
        <begin position="1"/>
        <end position="55"/>
    </location>
</feature>
<keyword id="KW-0687">Ribonucleoprotein</keyword>
<keyword id="KW-0689">Ribosomal protein</keyword>